<dbReference type="EMBL" id="CP000046">
    <property type="protein sequence ID" value="AAW38465.1"/>
    <property type="molecule type" value="Genomic_DNA"/>
</dbReference>
<dbReference type="RefSeq" id="WP_000636857.1">
    <property type="nucleotide sequence ID" value="NZ_JBGOFO010000014.1"/>
</dbReference>
<dbReference type="KEGG" id="sac:SACOL2158"/>
<dbReference type="HOGENOM" id="CLU_151983_0_0_9"/>
<dbReference type="Proteomes" id="UP000000530">
    <property type="component" value="Chromosome"/>
</dbReference>
<dbReference type="GO" id="GO:0005886">
    <property type="term" value="C:plasma membrane"/>
    <property type="evidence" value="ECO:0007669"/>
    <property type="project" value="UniProtKB-SubCell"/>
</dbReference>
<dbReference type="InterPro" id="IPR031396">
    <property type="entry name" value="SepA"/>
</dbReference>
<dbReference type="Pfam" id="PF17080">
    <property type="entry name" value="SepA"/>
    <property type="match status" value="1"/>
</dbReference>
<organism>
    <name type="scientific">Staphylococcus aureus (strain COL)</name>
    <dbReference type="NCBI Taxonomy" id="93062"/>
    <lineage>
        <taxon>Bacteria</taxon>
        <taxon>Bacillati</taxon>
        <taxon>Bacillota</taxon>
        <taxon>Bacilli</taxon>
        <taxon>Bacillales</taxon>
        <taxon>Staphylococcaceae</taxon>
        <taxon>Staphylococcus</taxon>
    </lineage>
</organism>
<keyword id="KW-1003">Cell membrane</keyword>
<keyword id="KW-0472">Membrane</keyword>
<keyword id="KW-0812">Transmembrane</keyword>
<keyword id="KW-1133">Transmembrane helix</keyword>
<keyword id="KW-0813">Transport</keyword>
<evidence type="ECO:0000250" key="1"/>
<evidence type="ECO:0000255" key="2"/>
<evidence type="ECO:0000305" key="3"/>
<name>MDEP_STAAC</name>
<sequence length="157" mass="18899">MIVNYLKHKFYNLLTTMIVLFIFVLSGAIFLTFLGFGLYGLSRILIYFRLGDFTYNRSMYDNLLYYGSYIIFGYFIIFAVEHLMDYFRKMLPENAYFRGATFHLISYTVATTLFYFIIHLNYVYINIDFWVIMVIIGFLYVCKLQFYPESKNLNNRK</sequence>
<proteinExistence type="inferred from homology"/>
<protein>
    <recommendedName>
        <fullName>Multidrug resistance efflux pump SepA</fullName>
    </recommendedName>
    <alternativeName>
        <fullName>Antiseptic resistance protein SepA</fullName>
    </alternativeName>
    <alternativeName>
        <fullName>Staphylococcal efflux pump A</fullName>
    </alternativeName>
</protein>
<accession>Q5HE37</accession>
<feature type="chain" id="PRO_0000351484" description="Multidrug resistance efflux pump SepA">
    <location>
        <begin position="1"/>
        <end position="157"/>
    </location>
</feature>
<feature type="transmembrane region" description="Helical" evidence="2">
    <location>
        <begin position="18"/>
        <end position="38"/>
    </location>
</feature>
<feature type="transmembrane region" description="Helical" evidence="2">
    <location>
        <begin position="63"/>
        <end position="83"/>
    </location>
</feature>
<feature type="transmembrane region" description="Helical" evidence="2">
    <location>
        <begin position="100"/>
        <end position="120"/>
    </location>
</feature>
<feature type="transmembrane region" description="Helical" evidence="2">
    <location>
        <begin position="122"/>
        <end position="142"/>
    </location>
</feature>
<reference key="1">
    <citation type="journal article" date="2005" name="J. Bacteriol.">
        <title>Insights on evolution of virulence and resistance from the complete genome analysis of an early methicillin-resistant Staphylococcus aureus strain and a biofilm-producing methicillin-resistant Staphylococcus epidermidis strain.</title>
        <authorList>
            <person name="Gill S.R."/>
            <person name="Fouts D.E."/>
            <person name="Archer G.L."/>
            <person name="Mongodin E.F."/>
            <person name="DeBoy R.T."/>
            <person name="Ravel J."/>
            <person name="Paulsen I.T."/>
            <person name="Kolonay J.F."/>
            <person name="Brinkac L.M."/>
            <person name="Beanan M.J."/>
            <person name="Dodson R.J."/>
            <person name="Daugherty S.C."/>
            <person name="Madupu R."/>
            <person name="Angiuoli S.V."/>
            <person name="Durkin A.S."/>
            <person name="Haft D.H."/>
            <person name="Vamathevan J.J."/>
            <person name="Khouri H."/>
            <person name="Utterback T.R."/>
            <person name="Lee C."/>
            <person name="Dimitrov G."/>
            <person name="Jiang L."/>
            <person name="Qin H."/>
            <person name="Weidman J."/>
            <person name="Tran K."/>
            <person name="Kang K.H."/>
            <person name="Hance I.R."/>
            <person name="Nelson K.E."/>
            <person name="Fraser C.M."/>
        </authorList>
    </citation>
    <scope>NUCLEOTIDE SEQUENCE [LARGE SCALE GENOMIC DNA]</scope>
    <source>
        <strain>COL</strain>
    </source>
</reference>
<gene>
    <name type="primary">sepA</name>
    <name type="ordered locus">SACOL2158</name>
</gene>
<comment type="function">
    <text evidence="1">Involved in multidrug efflux.</text>
</comment>
<comment type="subcellular location">
    <subcellularLocation>
        <location evidence="3">Cell membrane</location>
        <topology evidence="3">Multi-pass membrane protein</topology>
    </subcellularLocation>
</comment>
<comment type="similarity">
    <text evidence="3">Belongs to the multidrug resistance efflux pump SepA family.</text>
</comment>